<organism>
    <name type="scientific">Komagataella phaffii (strain GS115 / ATCC 20864)</name>
    <name type="common">Yeast</name>
    <name type="synonym">Pichia pastoris</name>
    <dbReference type="NCBI Taxonomy" id="644223"/>
    <lineage>
        <taxon>Eukaryota</taxon>
        <taxon>Fungi</taxon>
        <taxon>Dikarya</taxon>
        <taxon>Ascomycota</taxon>
        <taxon>Saccharomycotina</taxon>
        <taxon>Pichiomycetes</taxon>
        <taxon>Pichiales</taxon>
        <taxon>Pichiaceae</taxon>
        <taxon>Komagataella</taxon>
    </lineage>
</organism>
<proteinExistence type="evidence at protein level"/>
<keyword id="KW-0121">Carboxypeptidase</keyword>
<keyword id="KW-0903">Direct protein sequencing</keyword>
<keyword id="KW-1015">Disulfide bond</keyword>
<keyword id="KW-0325">Glycoprotein</keyword>
<keyword id="KW-0378">Hydrolase</keyword>
<keyword id="KW-0645">Protease</keyword>
<keyword id="KW-1185">Reference proteome</keyword>
<keyword id="KW-0732">Signal</keyword>
<keyword id="KW-0926">Vacuole</keyword>
<keyword id="KW-0865">Zymogen</keyword>
<dbReference type="EC" id="3.4.16.5"/>
<dbReference type="EMBL" id="X87987">
    <property type="protein sequence ID" value="CAA61240.1"/>
    <property type="molecule type" value="Genomic_DNA"/>
</dbReference>
<dbReference type="EMBL" id="FN392319">
    <property type="protein sequence ID" value="CAY67847.1"/>
    <property type="molecule type" value="Genomic_DNA"/>
</dbReference>
<dbReference type="PIR" id="S61713">
    <property type="entry name" value="S61713"/>
</dbReference>
<dbReference type="RefSeq" id="XP_002490128.1">
    <property type="nucleotide sequence ID" value="XM_002490083.1"/>
</dbReference>
<dbReference type="SMR" id="P52710"/>
<dbReference type="FunCoup" id="P52710">
    <property type="interactions" value="871"/>
</dbReference>
<dbReference type="STRING" id="644223.P52710"/>
<dbReference type="ESTHER" id="picpa-cbpy">
    <property type="family name" value="Carboxypeptidase_S10"/>
</dbReference>
<dbReference type="MEROPS" id="S10.001"/>
<dbReference type="GlyCosmos" id="P52710">
    <property type="glycosylation" value="4 sites, No reported glycans"/>
</dbReference>
<dbReference type="EnsemblFungi" id="CAY67847">
    <property type="protein sequence ID" value="CAY67847"/>
    <property type="gene ID" value="PAS_chr1-4_0013"/>
</dbReference>
<dbReference type="GeneID" id="8196853"/>
<dbReference type="KEGG" id="ppa:PAS_chr1-4_0013"/>
<dbReference type="eggNOG" id="KOG1282">
    <property type="taxonomic scope" value="Eukaryota"/>
</dbReference>
<dbReference type="HOGENOM" id="CLU_008523_10_4_1"/>
<dbReference type="InParanoid" id="P52710"/>
<dbReference type="OMA" id="GDWMKPF"/>
<dbReference type="OrthoDB" id="443318at2759"/>
<dbReference type="Proteomes" id="UP000000314">
    <property type="component" value="Chromosome 1"/>
</dbReference>
<dbReference type="GO" id="GO:0000324">
    <property type="term" value="C:fungal-type vacuole"/>
    <property type="evidence" value="ECO:0007669"/>
    <property type="project" value="TreeGrafter"/>
</dbReference>
<dbReference type="GO" id="GO:0004185">
    <property type="term" value="F:serine-type carboxypeptidase activity"/>
    <property type="evidence" value="ECO:0007669"/>
    <property type="project" value="UniProtKB-EC"/>
</dbReference>
<dbReference type="GO" id="GO:0006508">
    <property type="term" value="P:proteolysis"/>
    <property type="evidence" value="ECO:0007669"/>
    <property type="project" value="UniProtKB-KW"/>
</dbReference>
<dbReference type="FunFam" id="1.10.287.410:FF:000001">
    <property type="entry name" value="Carboxypeptidase Y"/>
    <property type="match status" value="1"/>
</dbReference>
<dbReference type="Gene3D" id="1.10.287.410">
    <property type="match status" value="1"/>
</dbReference>
<dbReference type="Gene3D" id="3.40.50.1820">
    <property type="entry name" value="alpha/beta hydrolase"/>
    <property type="match status" value="1"/>
</dbReference>
<dbReference type="InterPro" id="IPR029058">
    <property type="entry name" value="AB_hydrolase_fold"/>
</dbReference>
<dbReference type="InterPro" id="IPR001563">
    <property type="entry name" value="Peptidase_S10"/>
</dbReference>
<dbReference type="InterPro" id="IPR008442">
    <property type="entry name" value="Propeptide_carboxypepY"/>
</dbReference>
<dbReference type="InterPro" id="IPR033124">
    <property type="entry name" value="Ser_caboxypep_his_AS"/>
</dbReference>
<dbReference type="InterPro" id="IPR018202">
    <property type="entry name" value="Ser_caboxypep_ser_AS"/>
</dbReference>
<dbReference type="PANTHER" id="PTHR11802:SF113">
    <property type="entry name" value="SERINE CARBOXYPEPTIDASE CTSA-4.1"/>
    <property type="match status" value="1"/>
</dbReference>
<dbReference type="PANTHER" id="PTHR11802">
    <property type="entry name" value="SERINE PROTEASE FAMILY S10 SERINE CARBOXYPEPTIDASE"/>
    <property type="match status" value="1"/>
</dbReference>
<dbReference type="Pfam" id="PF05388">
    <property type="entry name" value="Carbpep_Y_N"/>
    <property type="match status" value="1"/>
</dbReference>
<dbReference type="Pfam" id="PF00450">
    <property type="entry name" value="Peptidase_S10"/>
    <property type="match status" value="1"/>
</dbReference>
<dbReference type="PRINTS" id="PR00724">
    <property type="entry name" value="CRBOXYPTASEC"/>
</dbReference>
<dbReference type="SUPFAM" id="SSF53474">
    <property type="entry name" value="alpha/beta-Hydrolases"/>
    <property type="match status" value="1"/>
</dbReference>
<dbReference type="PROSITE" id="PS00560">
    <property type="entry name" value="CARBOXYPEPT_SER_HIS"/>
    <property type="match status" value="1"/>
</dbReference>
<dbReference type="PROSITE" id="PS00131">
    <property type="entry name" value="CARBOXYPEPT_SER_SER"/>
    <property type="match status" value="1"/>
</dbReference>
<comment type="function">
    <text>Involved in degradation of small peptides.</text>
</comment>
<comment type="catalytic activity">
    <reaction evidence="3 4">
        <text>Release of a C-terminal amino acid with broad specificity.</text>
        <dbReference type="EC" id="3.4.16.5"/>
    </reaction>
</comment>
<comment type="subcellular location">
    <subcellularLocation>
        <location>Vacuole</location>
    </subcellularLocation>
    <text>Lysosome-like vacuoles.</text>
</comment>
<comment type="similarity">
    <text evidence="6">Belongs to the peptidase S10 family.</text>
</comment>
<name>CBPY_KOMPG</name>
<feature type="signal peptide" evidence="2">
    <location>
        <begin position="1"/>
        <end position="20"/>
    </location>
</feature>
<feature type="propeptide" id="PRO_0000004291" evidence="5">
    <location>
        <begin position="21"/>
        <end position="107"/>
    </location>
</feature>
<feature type="chain" id="PRO_0000004292" description="Carboxypeptidase Y">
    <location>
        <begin position="108"/>
        <end position="523"/>
    </location>
</feature>
<feature type="active site" evidence="1">
    <location>
        <position position="249"/>
    </location>
</feature>
<feature type="active site" evidence="1">
    <location>
        <position position="441"/>
    </location>
</feature>
<feature type="active site" evidence="1">
    <location>
        <position position="498"/>
    </location>
</feature>
<feature type="glycosylation site" description="N-linked (GlcNAc...) asparagine" evidence="2">
    <location>
        <position position="193"/>
    </location>
</feature>
<feature type="glycosylation site" description="N-linked (GlcNAc...) asparagine" evidence="2">
    <location>
        <position position="271"/>
    </location>
</feature>
<feature type="glycosylation site" description="N-linked (GlcNAc...) asparagine" evidence="2">
    <location>
        <position position="484"/>
    </location>
</feature>
<feature type="glycosylation site" description="N-linked (GlcNAc...) asparagine" evidence="2">
    <location>
        <position position="487"/>
    </location>
</feature>
<feature type="disulfide bond" evidence="1">
    <location>
        <begin position="162"/>
        <end position="401"/>
    </location>
</feature>
<feature type="disulfide bond" evidence="1">
    <location>
        <begin position="296"/>
        <end position="310"/>
    </location>
</feature>
<feature type="disulfide bond" evidence="1">
    <location>
        <begin position="320"/>
        <end position="343"/>
    </location>
</feature>
<feature type="disulfide bond" evidence="1">
    <location>
        <begin position="327"/>
        <end position="336"/>
    </location>
</feature>
<feature type="disulfide bond" evidence="1">
    <location>
        <begin position="365"/>
        <end position="371"/>
    </location>
</feature>
<reference key="1">
    <citation type="journal article" date="1996" name="Yeast">
        <title>Cloning and characterization of the Pichia pastoris PRC1 gene encoding carboxypeptidase Y.</title>
        <authorList>
            <person name="Ohi H."/>
            <person name="Ohtani W."/>
            <person name="Okazaki N."/>
            <person name="Furuhata N."/>
            <person name="Ohmura T."/>
        </authorList>
    </citation>
    <scope>NUCLEOTIDE SEQUENCE [GENOMIC DNA]</scope>
    <scope>PROTEIN SEQUENCE OF 108-142</scope>
</reference>
<reference key="2">
    <citation type="journal article" date="2009" name="Nat. Biotechnol.">
        <title>Genome sequence of the recombinant protein production host Pichia pastoris.</title>
        <authorList>
            <person name="De Schutter K."/>
            <person name="Lin Y.-C."/>
            <person name="Tiels P."/>
            <person name="Van Hecke A."/>
            <person name="Glinka S."/>
            <person name="Weber-Lehmann J."/>
            <person name="Rouze P."/>
            <person name="Van de Peer Y."/>
            <person name="Callewaert N."/>
        </authorList>
    </citation>
    <scope>NUCLEOTIDE SEQUENCE [LARGE SCALE GENOMIC DNA]</scope>
    <source>
        <strain>GS115 / ATCC 20864</strain>
    </source>
</reference>
<gene>
    <name type="primary">PRC1</name>
    <name type="ordered locus">PAS_chr1-4_0013</name>
</gene>
<accession>P52710</accession>
<accession>C4QX74</accession>
<sequence>MILHTYIILSLLTIFPKAIGLSLQMPMALEASYASLVEKATLAVGQEIDAIQKGIQQGWLEVETRFPTIVSQLSYSTGPKFAIKKKDATFWDFYVESQELPNYRLRVKRNNPEVLKVDFTKQYSGYLDVEADDKHFFYWFFESRNDPQNDPIILWLNGGPGCSSLTGLFFELGSSRINENLKPIFNPYSWNGNASIIYLDQPVNVGFSYSSSSVSNTVVAGEDVYAFLQLFFQHFPEYQTNDFHIAGESYAGHYIPVFADEILSQKNRNFNLTSVLIGNGLTDPLTQYRYYEPMACGEGGAPSVLPADECENMLVTQDKCLSLIQACYDSQSAFTCAPAAIYCNNAQMGPYQRTGKNVYDIRKECDGGSLCYKDLEFIDTYLNQKFVQDALGAEVDTYESCNFEINRNFLFAGDWMKPYHEHVSSLLNKGLPVLIYAGDKDFICNWLGNRAWTDVLPWVDADGFEKAEVQDWLVNGRKAGEFKNYSNFTYLRVYDAGHMAPYDQPENSHEMVNRWISGDFSFH</sequence>
<evidence type="ECO:0000250" key="1"/>
<evidence type="ECO:0000255" key="2"/>
<evidence type="ECO:0000255" key="3">
    <source>
        <dbReference type="PROSITE-ProRule" id="PRU10074"/>
    </source>
</evidence>
<evidence type="ECO:0000255" key="4">
    <source>
        <dbReference type="PROSITE-ProRule" id="PRU10075"/>
    </source>
</evidence>
<evidence type="ECO:0000269" key="5">
    <source>
    </source>
</evidence>
<evidence type="ECO:0000305" key="6"/>
<protein>
    <recommendedName>
        <fullName>Carboxypeptidase Y</fullName>
        <ecNumber>3.4.16.5</ecNumber>
    </recommendedName>
    <alternativeName>
        <fullName>Carboxypeptidase YSCY</fullName>
    </alternativeName>
</protein>